<name>YHEU_SALPB</name>
<dbReference type="EMBL" id="CP000886">
    <property type="protein sequence ID" value="ABX69626.1"/>
    <property type="molecule type" value="Genomic_DNA"/>
</dbReference>
<dbReference type="RefSeq" id="WP_000586568.1">
    <property type="nucleotide sequence ID" value="NC_010102.1"/>
</dbReference>
<dbReference type="SMR" id="A9MT26"/>
<dbReference type="KEGG" id="spq:SPAB_04309"/>
<dbReference type="PATRIC" id="fig|1016998.12.peg.4055"/>
<dbReference type="HOGENOM" id="CLU_186759_1_0_6"/>
<dbReference type="BioCyc" id="SENT1016998:SPAB_RS17550-MONOMER"/>
<dbReference type="Proteomes" id="UP000008556">
    <property type="component" value="Chromosome"/>
</dbReference>
<dbReference type="Gene3D" id="1.10.10.610">
    <property type="entry name" value="YehU-like"/>
    <property type="match status" value="1"/>
</dbReference>
<dbReference type="HAMAP" id="MF_00690">
    <property type="entry name" value="UPF0270"/>
    <property type="match status" value="1"/>
</dbReference>
<dbReference type="InterPro" id="IPR010648">
    <property type="entry name" value="UPF0270"/>
</dbReference>
<dbReference type="InterPro" id="IPR036685">
    <property type="entry name" value="YehU-like_sf"/>
</dbReference>
<dbReference type="NCBIfam" id="NF003438">
    <property type="entry name" value="PRK04966.1"/>
    <property type="match status" value="1"/>
</dbReference>
<dbReference type="Pfam" id="PF06794">
    <property type="entry name" value="UPF0270"/>
    <property type="match status" value="1"/>
</dbReference>
<dbReference type="PIRSF" id="PIRSF006169">
    <property type="entry name" value="UCP006169"/>
    <property type="match status" value="1"/>
</dbReference>
<dbReference type="SUPFAM" id="SSF118001">
    <property type="entry name" value="YehU-like"/>
    <property type="match status" value="1"/>
</dbReference>
<evidence type="ECO:0000255" key="1">
    <source>
        <dbReference type="HAMAP-Rule" id="MF_00690"/>
    </source>
</evidence>
<feature type="chain" id="PRO_1000083114" description="UPF0270 protein YheU">
    <location>
        <begin position="1"/>
        <end position="72"/>
    </location>
</feature>
<sequence>MIIPWQGLAPDTLDNLIESFVLREGTDYGEHERSLEQKVADVKRQLQSGEAVLVWSELHETVNIMPKKQFRE</sequence>
<reference key="1">
    <citation type="submission" date="2007-11" db="EMBL/GenBank/DDBJ databases">
        <authorList>
            <consortium name="The Salmonella enterica serovar Paratyphi B Genome Sequencing Project"/>
            <person name="McClelland M."/>
            <person name="Sanderson E.K."/>
            <person name="Porwollik S."/>
            <person name="Spieth J."/>
            <person name="Clifton W.S."/>
            <person name="Fulton R."/>
            <person name="Cordes M."/>
            <person name="Wollam A."/>
            <person name="Shah N."/>
            <person name="Pepin K."/>
            <person name="Bhonagiri V."/>
            <person name="Nash W."/>
            <person name="Johnson M."/>
            <person name="Thiruvilangam P."/>
            <person name="Wilson R."/>
        </authorList>
    </citation>
    <scope>NUCLEOTIDE SEQUENCE [LARGE SCALE GENOMIC DNA]</scope>
    <source>
        <strain>ATCC BAA-1250 / SPB7</strain>
    </source>
</reference>
<comment type="similarity">
    <text evidence="1">Belongs to the UPF0270 family.</text>
</comment>
<protein>
    <recommendedName>
        <fullName evidence="1">UPF0270 protein YheU</fullName>
    </recommendedName>
</protein>
<accession>A9MT26</accession>
<proteinExistence type="inferred from homology"/>
<gene>
    <name evidence="1" type="primary">yheU</name>
    <name type="ordered locus">SPAB_04309</name>
</gene>
<organism>
    <name type="scientific">Salmonella paratyphi B (strain ATCC BAA-1250 / SPB7)</name>
    <dbReference type="NCBI Taxonomy" id="1016998"/>
    <lineage>
        <taxon>Bacteria</taxon>
        <taxon>Pseudomonadati</taxon>
        <taxon>Pseudomonadota</taxon>
        <taxon>Gammaproteobacteria</taxon>
        <taxon>Enterobacterales</taxon>
        <taxon>Enterobacteriaceae</taxon>
        <taxon>Salmonella</taxon>
    </lineage>
</organism>